<name>KOJT_ASPOR</name>
<dbReference type="EMBL" id="BA000053">
    <property type="protein sequence ID" value="BAE63187.1"/>
    <property type="molecule type" value="Genomic_DNA"/>
</dbReference>
<dbReference type="RefSeq" id="XP_001824320.1">
    <property type="nucleotide sequence ID" value="XM_001824268.1"/>
</dbReference>
<dbReference type="STRING" id="510516.Q2U5H8"/>
<dbReference type="GlyCosmos" id="Q2U5H8">
    <property type="glycosylation" value="1 site, No reported glycans"/>
</dbReference>
<dbReference type="EnsemblFungi" id="BAE63187">
    <property type="protein sequence ID" value="BAE63187"/>
    <property type="gene ID" value="AO090113000138"/>
</dbReference>
<dbReference type="GeneID" id="5995967"/>
<dbReference type="KEGG" id="aor:AO090113000138"/>
<dbReference type="VEuPathDB" id="FungiDB:AO090113000138"/>
<dbReference type="HOGENOM" id="CLU_008455_11_1_1"/>
<dbReference type="OMA" id="QLAFRFI"/>
<dbReference type="OrthoDB" id="21924at5052"/>
<dbReference type="Proteomes" id="UP000006564">
    <property type="component" value="Chromosome 5"/>
</dbReference>
<dbReference type="GO" id="GO:0005886">
    <property type="term" value="C:plasma membrane"/>
    <property type="evidence" value="ECO:0007669"/>
    <property type="project" value="UniProtKB-SubCell"/>
</dbReference>
<dbReference type="GO" id="GO:0022857">
    <property type="term" value="F:transmembrane transporter activity"/>
    <property type="evidence" value="ECO:0007669"/>
    <property type="project" value="InterPro"/>
</dbReference>
<dbReference type="GO" id="GO:2001317">
    <property type="term" value="P:kojic acid biosynthetic process"/>
    <property type="evidence" value="ECO:0000315"/>
    <property type="project" value="GO_Central"/>
</dbReference>
<dbReference type="CDD" id="cd17323">
    <property type="entry name" value="MFS_Tpo1_MDR_like"/>
    <property type="match status" value="1"/>
</dbReference>
<dbReference type="FunFam" id="1.20.1250.20:FF:000082">
    <property type="entry name" value="MFS multidrug transporter, putative"/>
    <property type="match status" value="1"/>
</dbReference>
<dbReference type="Gene3D" id="1.20.1250.20">
    <property type="entry name" value="MFS general substrate transporter like domains"/>
    <property type="match status" value="1"/>
</dbReference>
<dbReference type="InterPro" id="IPR011701">
    <property type="entry name" value="MFS"/>
</dbReference>
<dbReference type="InterPro" id="IPR020846">
    <property type="entry name" value="MFS_dom"/>
</dbReference>
<dbReference type="InterPro" id="IPR036259">
    <property type="entry name" value="MFS_trans_sf"/>
</dbReference>
<dbReference type="PANTHER" id="PTHR23502">
    <property type="entry name" value="MAJOR FACILITATOR SUPERFAMILY"/>
    <property type="match status" value="1"/>
</dbReference>
<dbReference type="PANTHER" id="PTHR23502:SF47">
    <property type="entry name" value="MAJOR FACILITATOR SUPERFAMILY (MFS) PROFILE DOMAIN-CONTAINING PROTEIN-RELATED"/>
    <property type="match status" value="1"/>
</dbReference>
<dbReference type="Pfam" id="PF07690">
    <property type="entry name" value="MFS_1"/>
    <property type="match status" value="1"/>
</dbReference>
<dbReference type="SUPFAM" id="SSF103473">
    <property type="entry name" value="MFS general substrate transporter"/>
    <property type="match status" value="1"/>
</dbReference>
<dbReference type="PROSITE" id="PS50850">
    <property type="entry name" value="MFS"/>
    <property type="match status" value="1"/>
</dbReference>
<protein>
    <recommendedName>
        <fullName evidence="15">MFS-type transporter kojT</fullName>
    </recommendedName>
    <alternativeName>
        <fullName evidence="14">Kojic acid biosynthesis cluster protein T</fullName>
    </alternativeName>
    <alternativeName>
        <fullName evidence="14">Kojic acid transporter</fullName>
    </alternativeName>
</protein>
<comment type="function">
    <text evidence="4 10 12">MFS-type transporter; part of the gene cluster that mediates the biosynthesis of 5-hydroxy-2-hydroxymethyl-1,4-pyrone, also know as kojic acid, a by-product in the fermentation process of malting rice that acts as a chelation agent (PubMed:20849972, PubMed:35034313). Involved in the secretion of kojic acid (PubMed:20849972). Improves the antioxidant capacity via the accumulation of kojic acid that is also a strong oxidant (PubMed:37776988).</text>
</comment>
<comment type="subcellular location">
    <subcellularLocation>
        <location evidence="16">Cell membrane</location>
        <topology evidence="1">Multi-pass membrane protein</topology>
    </subcellularLocation>
</comment>
<comment type="induction">
    <text evidence="5 6 7 9 11">Expression is controlled by the kojic acid gene cluster transcription factor kojR (PubMed:21514215). Expression is also positively regulated by the secondary metabolism general regulator laeA (PubMed:21897021). Finally, nitrogen deficiency also positively regulates expression (PubMed:26657710). Expression is also regulated by the kojic acid related proteins kap1 and kap6 (PubMed:34950983, PubMed:35922587).</text>
</comment>
<comment type="disruption phenotype">
    <text evidence="4 10 11">Reduces secretion of kojic acid (PubMed:20849972, PubMed:35034313). Leads to the declined expression of kap6 (PubMed:35922587).</text>
</comment>
<comment type="biotechnology">
    <text evidence="3 8 13">Kojic acid can be used for several biotechnological applications, including use as an antibiotic, as an additive to prevent browning of food materials, and as an antioxidant (PubMed:17119644). Kojic acid is also interesting as an inhibitor of tyrosinase (PubMed:7714722). Finally, kojic acid has also been shown to have strong nematicidal activity (PubMed:27197670).</text>
</comment>
<comment type="similarity">
    <text evidence="15">Belongs to the major facilitator superfamily.</text>
</comment>
<accession>Q2U5H8</accession>
<proteinExistence type="evidence at protein level"/>
<reference key="1">
    <citation type="journal article" date="2005" name="Nature">
        <title>Genome sequencing and analysis of Aspergillus oryzae.</title>
        <authorList>
            <person name="Machida M."/>
            <person name="Asai K."/>
            <person name="Sano M."/>
            <person name="Tanaka T."/>
            <person name="Kumagai T."/>
            <person name="Terai G."/>
            <person name="Kusumoto K."/>
            <person name="Arima T."/>
            <person name="Akita O."/>
            <person name="Kashiwagi Y."/>
            <person name="Abe K."/>
            <person name="Gomi K."/>
            <person name="Horiuchi H."/>
            <person name="Kitamoto K."/>
            <person name="Kobayashi T."/>
            <person name="Takeuchi M."/>
            <person name="Denning D.W."/>
            <person name="Galagan J.E."/>
            <person name="Nierman W.C."/>
            <person name="Yu J."/>
            <person name="Archer D.B."/>
            <person name="Bennett J.W."/>
            <person name="Bhatnagar D."/>
            <person name="Cleveland T.E."/>
            <person name="Fedorova N.D."/>
            <person name="Gotoh O."/>
            <person name="Horikawa H."/>
            <person name="Hosoyama A."/>
            <person name="Ichinomiya M."/>
            <person name="Igarashi R."/>
            <person name="Iwashita K."/>
            <person name="Juvvadi P.R."/>
            <person name="Kato M."/>
            <person name="Kato Y."/>
            <person name="Kin T."/>
            <person name="Kokubun A."/>
            <person name="Maeda H."/>
            <person name="Maeyama N."/>
            <person name="Maruyama J."/>
            <person name="Nagasaki H."/>
            <person name="Nakajima T."/>
            <person name="Oda K."/>
            <person name="Okada K."/>
            <person name="Paulsen I."/>
            <person name="Sakamoto K."/>
            <person name="Sawano T."/>
            <person name="Takahashi M."/>
            <person name="Takase K."/>
            <person name="Terabayashi Y."/>
            <person name="Wortman J.R."/>
            <person name="Yamada O."/>
            <person name="Yamagata Y."/>
            <person name="Anazawa H."/>
            <person name="Hata Y."/>
            <person name="Koide Y."/>
            <person name="Komori T."/>
            <person name="Koyama Y."/>
            <person name="Minetoki T."/>
            <person name="Suharnan S."/>
            <person name="Tanaka A."/>
            <person name="Isono K."/>
            <person name="Kuhara S."/>
            <person name="Ogasawara N."/>
            <person name="Kikuchi H."/>
        </authorList>
    </citation>
    <scope>NUCLEOTIDE SEQUENCE [LARGE SCALE GENOMIC DNA]</scope>
    <source>
        <strain>ATCC 42149 / RIB 40</strain>
    </source>
</reference>
<reference key="2">
    <citation type="journal article" date="1994" name="J. Pharm. Pharmacol.">
        <title>Kojic acid, a cosmetic skin whitening agent, is a slow-binding inhibitor of catecholase activity of tyrosinase.</title>
        <authorList>
            <person name="Cabanes J."/>
            <person name="Chazarra S."/>
            <person name="Garcia-Carmona F."/>
        </authorList>
    </citation>
    <scope>BIOTECHNOLOGY</scope>
</reference>
<reference key="3">
    <citation type="journal article" date="2006" name="Nat. Prod. Rep.">
        <title>From miso, sake and shoyu to cosmetics: a century of science for kojic acid.</title>
        <authorList>
            <person name="Bentley R."/>
        </authorList>
    </citation>
    <scope>REVIEW ON BIOTECHNOLOGY</scope>
</reference>
<reference key="4">
    <citation type="journal article" date="2010" name="Fungal Genet. Biol.">
        <title>Identification and characterization of genes responsible for biosynthesis of kojic acid, an industrially important compound from Aspergillus oryzae.</title>
        <authorList>
            <person name="Terabayashi Y."/>
            <person name="Sano M."/>
            <person name="Yamane N."/>
            <person name="Marui J."/>
            <person name="Tamano K."/>
            <person name="Sagara J."/>
            <person name="Dohmoto M."/>
            <person name="Oda K."/>
            <person name="Ohshima E."/>
            <person name="Tachibana K."/>
            <person name="Higa Y."/>
            <person name="Ohashi S."/>
            <person name="Koike H."/>
            <person name="Machida M."/>
        </authorList>
    </citation>
    <scope>FUNCTION</scope>
    <scope>DISRUPTION PHENOTYPE</scope>
</reference>
<reference key="5">
    <citation type="journal article" date="2011" name="Biosci. Biotechnol. Biochem.">
        <title>Aspergillus oryzae laeA regulates kojic acid synthesis genes.</title>
        <authorList>
            <person name="Oda K."/>
            <person name="Kobayashi A."/>
            <person name="Ohashi S."/>
            <person name="Sano M."/>
        </authorList>
    </citation>
    <scope>INDUCTION</scope>
</reference>
<reference key="6">
    <citation type="journal article" date="2011" name="J. Biosci. Bioeng.">
        <title>Kojic acid biosynthesis in Aspergillus oryzae is regulated by a Zn(II)(2)Cys(6) transcriptional activator and induced by kojic acid at the transcriptional level.</title>
        <authorList>
            <person name="Marui J."/>
            <person name="Yamane N."/>
            <person name="Ohashi-Kunihiro S."/>
            <person name="Ando T."/>
            <person name="Terabayashi Y."/>
            <person name="Sano M."/>
            <person name="Ohashi S."/>
            <person name="Ohshima E."/>
            <person name="Tachibana K."/>
            <person name="Higa Y."/>
            <person name="Nishimura M."/>
            <person name="Koike H."/>
            <person name="Machida M."/>
        </authorList>
    </citation>
    <scope>INDUCTION</scope>
</reference>
<reference key="7">
    <citation type="journal article" date="2016" name="J. Biotechnol.">
        <title>Evaluation of kojic acid production in a repeated-batch PCS biofilm reactor.</title>
        <authorList>
            <person name="Liu J.M."/>
            <person name="Yu T.C."/>
            <person name="Lin S.P."/>
            <person name="Hsu R.J."/>
            <person name="Hsu K.D."/>
            <person name="Cheng K.C."/>
        </authorList>
    </citation>
    <scope>INDUCTION</scope>
</reference>
<reference key="8">
    <citation type="journal article" date="2016" name="J. Microbiol. Biotechnol.">
        <title>Nematicidal activity of kojic acid produced by Aspergillus oryzae against Meloidogyne incognita.</title>
        <authorList>
            <person name="Kim T.Y."/>
            <person name="Jang J.Y."/>
            <person name="Jeon S.J."/>
            <person name="Lee H.W."/>
            <person name="Bae C.H."/>
            <person name="Yeo J.H."/>
            <person name="Lee H.B."/>
            <person name="Kim I.S."/>
            <person name="Park H.W."/>
            <person name="Kim J.C."/>
        </authorList>
    </citation>
    <scope>BIOTECHNOLOGY</scope>
</reference>
<reference key="9">
    <citation type="journal article" date="2021" name="Arch. Microbiol.">
        <title>Identification and characterization of a novel gene Aokap1 involved in growth and kojic acid synthesis in Aspergillus oryzae.</title>
        <authorList>
            <person name="Li Y."/>
            <person name="Zhang H."/>
            <person name="Chen Z."/>
            <person name="Fan J."/>
            <person name="Chen T."/>
            <person name="Zeng B."/>
            <person name="Zhang Z."/>
        </authorList>
    </citation>
    <scope>INDUCTION</scope>
</reference>
<reference key="10">
    <citation type="journal article" date="2022" name="Folia Microbiol. (Praha)">
        <title>Construction of single, double, or triple mutants within kojic acid synthesis genes kojA, kojR, and kojT by the CRISPR/Cas9 tool in Aspergillus oryzae.</title>
        <authorList>
            <person name="Li Y."/>
            <person name="Zhang H."/>
            <person name="Chen Z."/>
            <person name="Fan J."/>
            <person name="Chen T."/>
            <person name="Zeng B."/>
            <person name="Zhang Z."/>
        </authorList>
    </citation>
    <scope>FUNCTION</scope>
    <scope>DISRUPTION PHENOTYPE</scope>
</reference>
<reference key="11">
    <citation type="journal article" date="2022" name="World J. Microbiol. Biotechnol.">
        <title>Disruption of Aokap6 near the kojic acid gene cluster affects the growth and kojic acid production in Aspergillus oryzae.</title>
        <authorList>
            <person name="Chen Z."/>
            <person name="Chen T."/>
            <person name="Wang H."/>
            <person name="Jiang C."/>
            <person name="Liu Y."/>
            <person name="Wu X."/>
            <person name="Li Y."/>
            <person name="Zeng B."/>
            <person name="Zhang Z."/>
        </authorList>
    </citation>
    <scope>DISRUPTION PHENOTYPE</scope>
    <scope>INDUCTION</scope>
</reference>
<reference key="12">
    <citation type="journal article" date="2024" name="Gene">
        <title>Overexpression of kojR and the entire koj gene cluster affect the kojic acid synthesis in Aspergillus oryzae 3.042.</title>
        <authorList>
            <person name="Zhang X."/>
            <person name="Guo R."/>
            <person name="Bi F."/>
            <person name="Chen Y."/>
            <person name="Xue X."/>
            <person name="Wang D."/>
        </authorList>
    </citation>
    <scope>FUNCTION</scope>
</reference>
<gene>
    <name evidence="14" type="primary">kojT</name>
    <name type="ORF">AO090113000138</name>
</gene>
<keyword id="KW-1003">Cell membrane</keyword>
<keyword id="KW-0325">Glycoprotein</keyword>
<keyword id="KW-0472">Membrane</keyword>
<keyword id="KW-1185">Reference proteome</keyword>
<keyword id="KW-0812">Transmembrane</keyword>
<keyword id="KW-1133">Transmembrane helix</keyword>
<keyword id="KW-0813">Transport</keyword>
<evidence type="ECO:0000255" key="1"/>
<evidence type="ECO:0000255" key="2">
    <source>
        <dbReference type="PROSITE-ProRule" id="PRU00498"/>
    </source>
</evidence>
<evidence type="ECO:0000269" key="3">
    <source>
    </source>
</evidence>
<evidence type="ECO:0000269" key="4">
    <source>
    </source>
</evidence>
<evidence type="ECO:0000269" key="5">
    <source>
    </source>
</evidence>
<evidence type="ECO:0000269" key="6">
    <source>
    </source>
</evidence>
<evidence type="ECO:0000269" key="7">
    <source>
    </source>
</evidence>
<evidence type="ECO:0000269" key="8">
    <source>
    </source>
</evidence>
<evidence type="ECO:0000269" key="9">
    <source>
    </source>
</evidence>
<evidence type="ECO:0000269" key="10">
    <source>
    </source>
</evidence>
<evidence type="ECO:0000269" key="11">
    <source>
    </source>
</evidence>
<evidence type="ECO:0000269" key="12">
    <source>
    </source>
</evidence>
<evidence type="ECO:0000269" key="13">
    <source>
    </source>
</evidence>
<evidence type="ECO:0000303" key="14">
    <source>
    </source>
</evidence>
<evidence type="ECO:0000305" key="15"/>
<evidence type="ECO:0000305" key="16">
    <source>
    </source>
</evidence>
<feature type="chain" id="PRO_0000436874" description="MFS-type transporter kojT">
    <location>
        <begin position="1"/>
        <end position="564"/>
    </location>
</feature>
<feature type="transmembrane region" description="Helical" evidence="1">
    <location>
        <begin position="120"/>
        <end position="140"/>
    </location>
</feature>
<feature type="transmembrane region" description="Helical" evidence="1">
    <location>
        <begin position="159"/>
        <end position="179"/>
    </location>
</feature>
<feature type="transmembrane region" description="Helical" evidence="1">
    <location>
        <begin position="187"/>
        <end position="207"/>
    </location>
</feature>
<feature type="transmembrane region" description="Helical" evidence="1">
    <location>
        <begin position="217"/>
        <end position="237"/>
    </location>
</feature>
<feature type="transmembrane region" description="Helical" evidence="1">
    <location>
        <begin position="249"/>
        <end position="269"/>
    </location>
</feature>
<feature type="transmembrane region" description="Helical" evidence="1">
    <location>
        <begin position="278"/>
        <end position="298"/>
    </location>
</feature>
<feature type="transmembrane region" description="Helical" evidence="1">
    <location>
        <begin position="353"/>
        <end position="373"/>
    </location>
</feature>
<feature type="transmembrane region" description="Helical" evidence="1">
    <location>
        <begin position="389"/>
        <end position="409"/>
    </location>
</feature>
<feature type="transmembrane region" description="Helical" evidence="1">
    <location>
        <begin position="437"/>
        <end position="457"/>
    </location>
</feature>
<feature type="transmembrane region" description="Helical" evidence="1">
    <location>
        <begin position="462"/>
        <end position="482"/>
    </location>
</feature>
<feature type="transmembrane region" description="Helical" evidence="1">
    <location>
        <begin position="500"/>
        <end position="520"/>
    </location>
</feature>
<feature type="transmembrane region" description="Helical" evidence="1">
    <location>
        <begin position="530"/>
        <end position="550"/>
    </location>
</feature>
<feature type="glycosylation site" description="N-linked (GlcNAc...) asparagine" evidence="2">
    <location>
        <position position="113"/>
    </location>
</feature>
<sequence>MQSFRQYRRMRRDLQESIKLHGPYAAAGDRHVQPTDDILEDADDARLEKGIHSMNGHGQSPYSTPGIVLHDGQRVTVPGVNLRRASEICERVNTKTLFIVGFDGPDDQLNPKNWSIGRKWATLGIVGTTGMLVGWASSIDSTVIKQGQEAFGVSEVAESLATALFLFAFGFGSLVAAPFSETVGRNPVYIATLSILMIFTMASGLAPNFGAQLAFRFLAGLFGCTPMTTFGGSMADIFDPMDRTYAFPVCCTLSFLGPFLAPMVGAFIGQSTHISWRWTEWCTLIMAALVTGAIFLFVPETYGPVLLQWKAKQLREITGDPRFMAEIELRQTSLVTRLMHSCSRPFHLFFREIMVALFTMYLVVVYIVLFGFLTGYEFIFGRTYGFTQGSVGLTFIGMNIGFLIAFAMVPHIYFSYKKRLQNAIENGHNGLPPEERLWFAMYGAPWLPISLFWMGWTSYPSISYWSPLVASVAFGFSVQGIFISTYQYLIDTYELFAASALVSATFFRYIAAGAMVIVSIPMYGNLGVHWSLTLLGCISVLMTPVPYIFYKYGHVIRQRNKKTP</sequence>
<organism>
    <name type="scientific">Aspergillus oryzae (strain ATCC 42149 / RIB 40)</name>
    <name type="common">Yellow koji mold</name>
    <dbReference type="NCBI Taxonomy" id="510516"/>
    <lineage>
        <taxon>Eukaryota</taxon>
        <taxon>Fungi</taxon>
        <taxon>Dikarya</taxon>
        <taxon>Ascomycota</taxon>
        <taxon>Pezizomycotina</taxon>
        <taxon>Eurotiomycetes</taxon>
        <taxon>Eurotiomycetidae</taxon>
        <taxon>Eurotiales</taxon>
        <taxon>Aspergillaceae</taxon>
        <taxon>Aspergillus</taxon>
        <taxon>Aspergillus subgen. Circumdati</taxon>
    </lineage>
</organism>